<name>RNH2_PROM1</name>
<dbReference type="EC" id="3.1.26.4" evidence="1"/>
<dbReference type="EMBL" id="CP000553">
    <property type="protein sequence ID" value="ABM76499.1"/>
    <property type="molecule type" value="Genomic_DNA"/>
</dbReference>
<dbReference type="RefSeq" id="WP_011824471.1">
    <property type="nucleotide sequence ID" value="NC_008819.1"/>
</dbReference>
<dbReference type="SMR" id="A2C4T9"/>
<dbReference type="KEGG" id="pme:NATL1_19431"/>
<dbReference type="eggNOG" id="COG0164">
    <property type="taxonomic scope" value="Bacteria"/>
</dbReference>
<dbReference type="HOGENOM" id="CLU_036532_3_1_3"/>
<dbReference type="Proteomes" id="UP000002592">
    <property type="component" value="Chromosome"/>
</dbReference>
<dbReference type="GO" id="GO:0005737">
    <property type="term" value="C:cytoplasm"/>
    <property type="evidence" value="ECO:0007669"/>
    <property type="project" value="UniProtKB-SubCell"/>
</dbReference>
<dbReference type="GO" id="GO:0032299">
    <property type="term" value="C:ribonuclease H2 complex"/>
    <property type="evidence" value="ECO:0007669"/>
    <property type="project" value="TreeGrafter"/>
</dbReference>
<dbReference type="GO" id="GO:0030145">
    <property type="term" value="F:manganese ion binding"/>
    <property type="evidence" value="ECO:0007669"/>
    <property type="project" value="UniProtKB-UniRule"/>
</dbReference>
<dbReference type="GO" id="GO:0003723">
    <property type="term" value="F:RNA binding"/>
    <property type="evidence" value="ECO:0007669"/>
    <property type="project" value="InterPro"/>
</dbReference>
<dbReference type="GO" id="GO:0004523">
    <property type="term" value="F:RNA-DNA hybrid ribonuclease activity"/>
    <property type="evidence" value="ECO:0007669"/>
    <property type="project" value="UniProtKB-UniRule"/>
</dbReference>
<dbReference type="GO" id="GO:0043137">
    <property type="term" value="P:DNA replication, removal of RNA primer"/>
    <property type="evidence" value="ECO:0007669"/>
    <property type="project" value="TreeGrafter"/>
</dbReference>
<dbReference type="GO" id="GO:0006298">
    <property type="term" value="P:mismatch repair"/>
    <property type="evidence" value="ECO:0007669"/>
    <property type="project" value="TreeGrafter"/>
</dbReference>
<dbReference type="CDD" id="cd07182">
    <property type="entry name" value="RNase_HII_bacteria_HII_like"/>
    <property type="match status" value="1"/>
</dbReference>
<dbReference type="Gene3D" id="3.30.420.10">
    <property type="entry name" value="Ribonuclease H-like superfamily/Ribonuclease H"/>
    <property type="match status" value="1"/>
</dbReference>
<dbReference type="HAMAP" id="MF_00052_B">
    <property type="entry name" value="RNase_HII_B"/>
    <property type="match status" value="1"/>
</dbReference>
<dbReference type="InterPro" id="IPR022898">
    <property type="entry name" value="RNase_HII"/>
</dbReference>
<dbReference type="InterPro" id="IPR001352">
    <property type="entry name" value="RNase_HII/HIII"/>
</dbReference>
<dbReference type="InterPro" id="IPR024567">
    <property type="entry name" value="RNase_HII/HIII_dom"/>
</dbReference>
<dbReference type="InterPro" id="IPR012337">
    <property type="entry name" value="RNaseH-like_sf"/>
</dbReference>
<dbReference type="InterPro" id="IPR036397">
    <property type="entry name" value="RNaseH_sf"/>
</dbReference>
<dbReference type="NCBIfam" id="NF000595">
    <property type="entry name" value="PRK00015.1-3"/>
    <property type="match status" value="1"/>
</dbReference>
<dbReference type="NCBIfam" id="NF010537">
    <property type="entry name" value="PRK13925.1"/>
    <property type="match status" value="1"/>
</dbReference>
<dbReference type="PANTHER" id="PTHR10954">
    <property type="entry name" value="RIBONUCLEASE H2 SUBUNIT A"/>
    <property type="match status" value="1"/>
</dbReference>
<dbReference type="PANTHER" id="PTHR10954:SF18">
    <property type="entry name" value="RIBONUCLEASE HII"/>
    <property type="match status" value="1"/>
</dbReference>
<dbReference type="Pfam" id="PF01351">
    <property type="entry name" value="RNase_HII"/>
    <property type="match status" value="1"/>
</dbReference>
<dbReference type="SUPFAM" id="SSF53098">
    <property type="entry name" value="Ribonuclease H-like"/>
    <property type="match status" value="1"/>
</dbReference>
<dbReference type="PROSITE" id="PS51975">
    <property type="entry name" value="RNASE_H_2"/>
    <property type="match status" value="1"/>
</dbReference>
<keyword id="KW-0963">Cytoplasm</keyword>
<keyword id="KW-0255">Endonuclease</keyword>
<keyword id="KW-0378">Hydrolase</keyword>
<keyword id="KW-0464">Manganese</keyword>
<keyword id="KW-0479">Metal-binding</keyword>
<keyword id="KW-0540">Nuclease</keyword>
<protein>
    <recommendedName>
        <fullName evidence="1">Ribonuclease HII</fullName>
        <shortName evidence="1">RNase HII</shortName>
        <ecNumber evidence="1">3.1.26.4</ecNumber>
    </recommendedName>
</protein>
<gene>
    <name evidence="1" type="primary">rnhB</name>
    <name type="ordered locus">NATL1_19431</name>
</gene>
<organism>
    <name type="scientific">Prochlorococcus marinus (strain NATL1A)</name>
    <dbReference type="NCBI Taxonomy" id="167555"/>
    <lineage>
        <taxon>Bacteria</taxon>
        <taxon>Bacillati</taxon>
        <taxon>Cyanobacteriota</taxon>
        <taxon>Cyanophyceae</taxon>
        <taxon>Synechococcales</taxon>
        <taxon>Prochlorococcaceae</taxon>
        <taxon>Prochlorococcus</taxon>
    </lineage>
</organism>
<feature type="chain" id="PRO_1000031176" description="Ribonuclease HII">
    <location>
        <begin position="1"/>
        <end position="195"/>
    </location>
</feature>
<feature type="domain" description="RNase H type-2" evidence="2">
    <location>
        <begin position="6"/>
        <end position="195"/>
    </location>
</feature>
<feature type="binding site" evidence="1">
    <location>
        <position position="12"/>
    </location>
    <ligand>
        <name>a divalent metal cation</name>
        <dbReference type="ChEBI" id="CHEBI:60240"/>
    </ligand>
</feature>
<feature type="binding site" evidence="1">
    <location>
        <position position="13"/>
    </location>
    <ligand>
        <name>a divalent metal cation</name>
        <dbReference type="ChEBI" id="CHEBI:60240"/>
    </ligand>
</feature>
<feature type="binding site" evidence="1">
    <location>
        <position position="108"/>
    </location>
    <ligand>
        <name>a divalent metal cation</name>
        <dbReference type="ChEBI" id="CHEBI:60240"/>
    </ligand>
</feature>
<proteinExistence type="inferred from homology"/>
<comment type="function">
    <text evidence="1">Endonuclease that specifically degrades the RNA of RNA-DNA hybrids.</text>
</comment>
<comment type="catalytic activity">
    <reaction evidence="1">
        <text>Endonucleolytic cleavage to 5'-phosphomonoester.</text>
        <dbReference type="EC" id="3.1.26.4"/>
    </reaction>
</comment>
<comment type="cofactor">
    <cofactor evidence="1">
        <name>Mn(2+)</name>
        <dbReference type="ChEBI" id="CHEBI:29035"/>
    </cofactor>
    <cofactor evidence="1">
        <name>Mg(2+)</name>
        <dbReference type="ChEBI" id="CHEBI:18420"/>
    </cofactor>
    <text evidence="1">Manganese or magnesium. Binds 1 divalent metal ion per monomer in the absence of substrate. May bind a second metal ion after substrate binding.</text>
</comment>
<comment type="subcellular location">
    <subcellularLocation>
        <location evidence="1">Cytoplasm</location>
    </subcellularLocation>
</comment>
<comment type="similarity">
    <text evidence="1">Belongs to the RNase HII family.</text>
</comment>
<evidence type="ECO:0000255" key="1">
    <source>
        <dbReference type="HAMAP-Rule" id="MF_00052"/>
    </source>
</evidence>
<evidence type="ECO:0000255" key="2">
    <source>
        <dbReference type="PROSITE-ProRule" id="PRU01319"/>
    </source>
</evidence>
<accession>A2C4T9</accession>
<sequence length="195" mass="21709">MEDIKSLIAGVDEVGKGCLFGPVFAAAVILSKENEIELLNQGLKDSKKLSHRQRHNLVPLIKTNSIAWTIGQASAREIDVIGIRDATEKAMLRALEKFSSPPDLILVDGILPIRLWPGKQKTQVRGESHFASIAAASVLAKETRDELIKRLARKYNCYGLEKNKGYGTEIHRTNLIKEGATKLHRKSFISRLEIN</sequence>
<reference key="1">
    <citation type="journal article" date="2007" name="PLoS Genet.">
        <title>Patterns and implications of gene gain and loss in the evolution of Prochlorococcus.</title>
        <authorList>
            <person name="Kettler G.C."/>
            <person name="Martiny A.C."/>
            <person name="Huang K."/>
            <person name="Zucker J."/>
            <person name="Coleman M.L."/>
            <person name="Rodrigue S."/>
            <person name="Chen F."/>
            <person name="Lapidus A."/>
            <person name="Ferriera S."/>
            <person name="Johnson J."/>
            <person name="Steglich C."/>
            <person name="Church G.M."/>
            <person name="Richardson P."/>
            <person name="Chisholm S.W."/>
        </authorList>
    </citation>
    <scope>NUCLEOTIDE SEQUENCE [LARGE SCALE GENOMIC DNA]</scope>
    <source>
        <strain>NATL1A</strain>
    </source>
</reference>